<evidence type="ECO:0000255" key="1">
    <source>
        <dbReference type="HAMAP-Rule" id="MF_00387"/>
    </source>
</evidence>
<protein>
    <recommendedName>
        <fullName evidence="1">Acyl-[acyl-carrier-protein]--UDP-N-acetylglucosamine O-acyltransferase</fullName>
        <shortName evidence="1">UDP-N-acetylglucosamine acyltransferase</shortName>
        <ecNumber evidence="1">2.3.1.129</ecNumber>
    </recommendedName>
</protein>
<sequence length="262" mass="28080">MIDKSAFVHPTAIVEEGASIGANAHIGPFCIVGPHVEIGEGTVLKSHVVVNGHTKIGRDNEIYQFASIGEVNQDLKYAGEPTRVEIGDRNRIRESVTIHRGTVQGGGLTKVGSDNLLMINAHIAHDCTVGNRCILANNATLAGHVSVDDFAIIGGMTAVHQFCIIGAHVMVGGCSGVAQDVPPYVIAQGNHATPFGVNIEGLKRRGFSREAITAIRNAYKLIYRSGKTLDEVKPEIAELAETYPEVKAFTDFFARSTRGLIR</sequence>
<proteinExistence type="inferred from homology"/>
<comment type="function">
    <text evidence="1">Involved in the biosynthesis of lipid A, a phosphorylated glycolipid that anchors the lipopolysaccharide to the outer membrane of the cell.</text>
</comment>
<comment type="catalytic activity">
    <reaction evidence="1">
        <text>a (3R)-hydroxyacyl-[ACP] + UDP-N-acetyl-alpha-D-glucosamine = a UDP-3-O-[(3R)-3-hydroxyacyl]-N-acetyl-alpha-D-glucosamine + holo-[ACP]</text>
        <dbReference type="Rhea" id="RHEA:67812"/>
        <dbReference type="Rhea" id="RHEA-COMP:9685"/>
        <dbReference type="Rhea" id="RHEA-COMP:9945"/>
        <dbReference type="ChEBI" id="CHEBI:57705"/>
        <dbReference type="ChEBI" id="CHEBI:64479"/>
        <dbReference type="ChEBI" id="CHEBI:78827"/>
        <dbReference type="ChEBI" id="CHEBI:173225"/>
        <dbReference type="EC" id="2.3.1.129"/>
    </reaction>
</comment>
<comment type="pathway">
    <text evidence="1">Glycolipid biosynthesis; lipid IV(A) biosynthesis; lipid IV(A) from (3R)-3-hydroxytetradecanoyl-[acyl-carrier-protein] and UDP-N-acetyl-alpha-D-glucosamine: step 1/6.</text>
</comment>
<comment type="subunit">
    <text evidence="1">Homotrimer.</text>
</comment>
<comment type="subcellular location">
    <subcellularLocation>
        <location evidence="1">Cytoplasm</location>
    </subcellularLocation>
</comment>
<comment type="similarity">
    <text evidence="1">Belongs to the transferase hexapeptide repeat family. LpxA subfamily.</text>
</comment>
<keyword id="KW-0012">Acyltransferase</keyword>
<keyword id="KW-0963">Cytoplasm</keyword>
<keyword id="KW-0441">Lipid A biosynthesis</keyword>
<keyword id="KW-0444">Lipid biosynthesis</keyword>
<keyword id="KW-0443">Lipid metabolism</keyword>
<keyword id="KW-1185">Reference proteome</keyword>
<keyword id="KW-0677">Repeat</keyword>
<keyword id="KW-0808">Transferase</keyword>
<name>LPXA_ECO24</name>
<reference key="1">
    <citation type="journal article" date="2008" name="J. Bacteriol.">
        <title>The pangenome structure of Escherichia coli: comparative genomic analysis of E. coli commensal and pathogenic isolates.</title>
        <authorList>
            <person name="Rasko D.A."/>
            <person name="Rosovitz M.J."/>
            <person name="Myers G.S.A."/>
            <person name="Mongodin E.F."/>
            <person name="Fricke W.F."/>
            <person name="Gajer P."/>
            <person name="Crabtree J."/>
            <person name="Sebaihia M."/>
            <person name="Thomson N.R."/>
            <person name="Chaudhuri R."/>
            <person name="Henderson I.R."/>
            <person name="Sperandio V."/>
            <person name="Ravel J."/>
        </authorList>
    </citation>
    <scope>NUCLEOTIDE SEQUENCE [LARGE SCALE GENOMIC DNA]</scope>
    <source>
        <strain>E24377A / ETEC</strain>
    </source>
</reference>
<feature type="chain" id="PRO_1000060732" description="Acyl-[acyl-carrier-protein]--UDP-N-acetylglucosamine O-acyltransferase">
    <location>
        <begin position="1"/>
        <end position="262"/>
    </location>
</feature>
<accession>A7ZHS1</accession>
<organism>
    <name type="scientific">Escherichia coli O139:H28 (strain E24377A / ETEC)</name>
    <dbReference type="NCBI Taxonomy" id="331111"/>
    <lineage>
        <taxon>Bacteria</taxon>
        <taxon>Pseudomonadati</taxon>
        <taxon>Pseudomonadota</taxon>
        <taxon>Gammaproteobacteria</taxon>
        <taxon>Enterobacterales</taxon>
        <taxon>Enterobacteriaceae</taxon>
        <taxon>Escherichia</taxon>
    </lineage>
</organism>
<dbReference type="EC" id="2.3.1.129" evidence="1"/>
<dbReference type="EMBL" id="CP000800">
    <property type="protein sequence ID" value="ABV17840.1"/>
    <property type="molecule type" value="Genomic_DNA"/>
</dbReference>
<dbReference type="RefSeq" id="WP_000565966.1">
    <property type="nucleotide sequence ID" value="NC_009801.1"/>
</dbReference>
<dbReference type="SMR" id="A7ZHS1"/>
<dbReference type="GeneID" id="93777244"/>
<dbReference type="KEGG" id="ecw:EcE24377A_0185"/>
<dbReference type="HOGENOM" id="CLU_061249_0_0_6"/>
<dbReference type="UniPathway" id="UPA00359">
    <property type="reaction ID" value="UER00477"/>
</dbReference>
<dbReference type="Proteomes" id="UP000001122">
    <property type="component" value="Chromosome"/>
</dbReference>
<dbReference type="GO" id="GO:0005737">
    <property type="term" value="C:cytoplasm"/>
    <property type="evidence" value="ECO:0007669"/>
    <property type="project" value="UniProtKB-SubCell"/>
</dbReference>
<dbReference type="GO" id="GO:0016020">
    <property type="term" value="C:membrane"/>
    <property type="evidence" value="ECO:0007669"/>
    <property type="project" value="GOC"/>
</dbReference>
<dbReference type="GO" id="GO:0008780">
    <property type="term" value="F:acyl-[acyl-carrier-protein]-UDP-N-acetylglucosamine O-acyltransferase activity"/>
    <property type="evidence" value="ECO:0007669"/>
    <property type="project" value="UniProtKB-UniRule"/>
</dbReference>
<dbReference type="GO" id="GO:0009245">
    <property type="term" value="P:lipid A biosynthetic process"/>
    <property type="evidence" value="ECO:0007669"/>
    <property type="project" value="UniProtKB-UniRule"/>
</dbReference>
<dbReference type="CDD" id="cd03351">
    <property type="entry name" value="LbH_UDP-GlcNAc_AT"/>
    <property type="match status" value="1"/>
</dbReference>
<dbReference type="FunFam" id="1.20.1180.10:FF:000001">
    <property type="entry name" value="Acyl-[acyl-carrier-protein]--UDP-N-acetylglucosamine O-acyltransferase"/>
    <property type="match status" value="1"/>
</dbReference>
<dbReference type="FunFam" id="2.160.10.10:FF:000003">
    <property type="entry name" value="Acyl-[acyl-carrier-protein]--UDP-N-acetylglucosamine O-acyltransferase"/>
    <property type="match status" value="1"/>
</dbReference>
<dbReference type="Gene3D" id="2.160.10.10">
    <property type="entry name" value="Hexapeptide repeat proteins"/>
    <property type="match status" value="1"/>
</dbReference>
<dbReference type="Gene3D" id="1.20.1180.10">
    <property type="entry name" value="Udp N-acetylglucosamine O-acyltransferase, C-terminal domain"/>
    <property type="match status" value="1"/>
</dbReference>
<dbReference type="HAMAP" id="MF_00387">
    <property type="entry name" value="LpxA"/>
    <property type="match status" value="1"/>
</dbReference>
<dbReference type="InterPro" id="IPR029098">
    <property type="entry name" value="Acetyltransf_C"/>
</dbReference>
<dbReference type="InterPro" id="IPR037157">
    <property type="entry name" value="Acetyltransf_C_sf"/>
</dbReference>
<dbReference type="InterPro" id="IPR001451">
    <property type="entry name" value="Hexapep"/>
</dbReference>
<dbReference type="InterPro" id="IPR018357">
    <property type="entry name" value="Hexapep_transf_CS"/>
</dbReference>
<dbReference type="InterPro" id="IPR010137">
    <property type="entry name" value="Lipid_A_LpxA"/>
</dbReference>
<dbReference type="InterPro" id="IPR011004">
    <property type="entry name" value="Trimer_LpxA-like_sf"/>
</dbReference>
<dbReference type="NCBIfam" id="TIGR01852">
    <property type="entry name" value="lipid_A_lpxA"/>
    <property type="match status" value="1"/>
</dbReference>
<dbReference type="NCBIfam" id="NF003657">
    <property type="entry name" value="PRK05289.1"/>
    <property type="match status" value="1"/>
</dbReference>
<dbReference type="PANTHER" id="PTHR43480">
    <property type="entry name" value="ACYL-[ACYL-CARRIER-PROTEIN]--UDP-N-ACETYLGLUCOSAMINE O-ACYLTRANSFERASE"/>
    <property type="match status" value="1"/>
</dbReference>
<dbReference type="PANTHER" id="PTHR43480:SF1">
    <property type="entry name" value="ACYL-[ACYL-CARRIER-PROTEIN]--UDP-N-ACETYLGLUCOSAMINE O-ACYLTRANSFERASE, MITOCHONDRIAL-RELATED"/>
    <property type="match status" value="1"/>
</dbReference>
<dbReference type="Pfam" id="PF13720">
    <property type="entry name" value="Acetyltransf_11"/>
    <property type="match status" value="1"/>
</dbReference>
<dbReference type="Pfam" id="PF00132">
    <property type="entry name" value="Hexapep"/>
    <property type="match status" value="2"/>
</dbReference>
<dbReference type="PIRSF" id="PIRSF000456">
    <property type="entry name" value="UDP-GlcNAc_acltr"/>
    <property type="match status" value="1"/>
</dbReference>
<dbReference type="SUPFAM" id="SSF51161">
    <property type="entry name" value="Trimeric LpxA-like enzymes"/>
    <property type="match status" value="1"/>
</dbReference>
<dbReference type="PROSITE" id="PS00101">
    <property type="entry name" value="HEXAPEP_TRANSFERASES"/>
    <property type="match status" value="2"/>
</dbReference>
<gene>
    <name evidence="1" type="primary">lpxA</name>
    <name type="ordered locus">EcE24377A_0185</name>
</gene>